<organism>
    <name type="scientific">Mus musculus</name>
    <name type="common">Mouse</name>
    <dbReference type="NCBI Taxonomy" id="10090"/>
    <lineage>
        <taxon>Eukaryota</taxon>
        <taxon>Metazoa</taxon>
        <taxon>Chordata</taxon>
        <taxon>Craniata</taxon>
        <taxon>Vertebrata</taxon>
        <taxon>Euteleostomi</taxon>
        <taxon>Mammalia</taxon>
        <taxon>Eutheria</taxon>
        <taxon>Euarchontoglires</taxon>
        <taxon>Glires</taxon>
        <taxon>Rodentia</taxon>
        <taxon>Myomorpha</taxon>
        <taxon>Muroidea</taxon>
        <taxon>Muridae</taxon>
        <taxon>Murinae</taxon>
        <taxon>Mus</taxon>
        <taxon>Mus</taxon>
    </lineage>
</organism>
<gene>
    <name evidence="12 15" type="primary">Ngp</name>
</gene>
<keyword id="KW-0903">Direct protein sequencing</keyword>
<keyword id="KW-1015">Disulfide bond</keyword>
<keyword id="KW-0646">Protease inhibitor</keyword>
<keyword id="KW-1185">Reference proteome</keyword>
<keyword id="KW-0964">Secreted</keyword>
<keyword id="KW-0732">Signal</keyword>
<keyword id="KW-0789">Thiol protease inhibitor</keyword>
<keyword id="KW-0043">Tumor suppressor</keyword>
<name>NGP_MOUSE</name>
<protein>
    <recommendedName>
        <fullName evidence="12 15">Neutrophilic granule protein</fullName>
        <shortName evidence="15">NGP</shortName>
    </recommendedName>
    <alternativeName>
        <fullName evidence="6">Cystatin-like protein</fullName>
    </alternativeName>
    <alternativeName>
        <fullName evidence="8 10">Myeloid bactenecin protein</fullName>
    </alternativeName>
    <alternativeName>
        <fullName evidence="7 11">Myeloid secondary granule protein</fullName>
    </alternativeName>
</protein>
<accession>O08692</accession>
<accession>Q61903</accession>
<comment type="function">
    <text evidence="4">Acts as an inhibitor of cathepsin B (CTSB) activity. Plays a role as a negative regulator of tumor vascular development, cell invasion and metastasis.</text>
</comment>
<comment type="subunit">
    <text evidence="4">Monomer. Homodimer; disulfide-linked.</text>
</comment>
<comment type="subcellular location">
    <subcellularLocation>
        <location evidence="4">Secreted</location>
    </subcellularLocation>
    <subcellularLocation>
        <location evidence="5">Cytoplasmic granule</location>
    </subcellularLocation>
    <text evidence="4 5">Localizes in cytoplasmic granules of neutrophilic precursors (PubMed:8749713).</text>
</comment>
<comment type="tissue specificity">
    <text evidence="4 5">Expressed in myeloid bone marrow cells. Expressed in neutrophilic precursors (at protein level) (PubMed:8749713). Expressed in myeloid bone marrow cells (PubMed:21518852).</text>
</comment>
<comment type="induction">
    <text evidence="3 4 5">Up-regulated by CCAAT/enhancer-binding proteins CEBPA and CEBPE and transcription factor SPI1 (at protein level) (PubMed:12515729). Down-regulated in malignant tumor conditioned medium (PubMed:21518852). Up-regulated during early bone marrow differentiation by the granulocyte-macrophage colony-stimulating factor CSF2 and down-regulated during granulocytic maturation (PubMed:8749713).</text>
</comment>
<comment type="similarity">
    <text evidence="9">Belongs to the cathelicidin family.</text>
</comment>
<proteinExistence type="evidence at protein level"/>
<dbReference type="EMBL" id="L37297">
    <property type="protein sequence ID" value="AAC42088.1"/>
    <property type="molecule type" value="mRNA"/>
</dbReference>
<dbReference type="EMBL" id="U95002">
    <property type="protein sequence ID" value="AAB53634.1"/>
    <property type="molecule type" value="mRNA"/>
</dbReference>
<dbReference type="EMBL" id="AK009649">
    <property type="protein sequence ID" value="BAB26414.1"/>
    <property type="molecule type" value="mRNA"/>
</dbReference>
<dbReference type="EMBL" id="AC160104">
    <property type="status" value="NOT_ANNOTATED_CDS"/>
    <property type="molecule type" value="Genomic_DNA"/>
</dbReference>
<dbReference type="EMBL" id="CH466621">
    <property type="protein sequence ID" value="EDL09016.1"/>
    <property type="molecule type" value="Genomic_DNA"/>
</dbReference>
<dbReference type="EMBL" id="BC119403">
    <property type="protein sequence ID" value="AAI19404.1"/>
    <property type="molecule type" value="mRNA"/>
</dbReference>
<dbReference type="EMBL" id="BC119405">
    <property type="protein sequence ID" value="AAI19406.1"/>
    <property type="molecule type" value="mRNA"/>
</dbReference>
<dbReference type="CCDS" id="CCDS23566.1"/>
<dbReference type="RefSeq" id="NP_032720.2">
    <property type="nucleotide sequence ID" value="NM_008694.2"/>
</dbReference>
<dbReference type="SMR" id="O08692"/>
<dbReference type="FunCoup" id="O08692">
    <property type="interactions" value="14"/>
</dbReference>
<dbReference type="STRING" id="10090.ENSMUSP00000035061"/>
<dbReference type="TCDB" id="1.C.33.1.7">
    <property type="family name" value="the cathelicidin (cathelicidin) family"/>
</dbReference>
<dbReference type="iPTMnet" id="O08692"/>
<dbReference type="PhosphoSitePlus" id="O08692"/>
<dbReference type="jPOST" id="O08692"/>
<dbReference type="PaxDb" id="10090-ENSMUSP00000035061"/>
<dbReference type="PeptideAtlas" id="O08692"/>
<dbReference type="ProteomicsDB" id="287420"/>
<dbReference type="DNASU" id="18054"/>
<dbReference type="Ensembl" id="ENSMUST00000035061.9">
    <property type="protein sequence ID" value="ENSMUSP00000035061.7"/>
    <property type="gene ID" value="ENSMUSG00000032484.9"/>
</dbReference>
<dbReference type="GeneID" id="18054"/>
<dbReference type="KEGG" id="mmu:18054"/>
<dbReference type="UCSC" id="uc009rtz.2">
    <property type="organism name" value="mouse"/>
</dbReference>
<dbReference type="AGR" id="MGI:105983"/>
<dbReference type="CTD" id="18054"/>
<dbReference type="MGI" id="MGI:105983">
    <property type="gene designation" value="Ngp"/>
</dbReference>
<dbReference type="VEuPathDB" id="HostDB:ENSMUSG00000032484"/>
<dbReference type="eggNOG" id="ENOG502SU6N">
    <property type="taxonomic scope" value="Eukaryota"/>
</dbReference>
<dbReference type="GeneTree" id="ENSGT00730000111701"/>
<dbReference type="HOGENOM" id="CLU_121724_1_0_1"/>
<dbReference type="InParanoid" id="O08692"/>
<dbReference type="OMA" id="PQDCAFR"/>
<dbReference type="OrthoDB" id="9835709at2759"/>
<dbReference type="PhylomeDB" id="O08692"/>
<dbReference type="TreeFam" id="TF338457"/>
<dbReference type="BioGRID-ORCS" id="18054">
    <property type="hits" value="1 hit in 76 CRISPR screens"/>
</dbReference>
<dbReference type="ChiTaRS" id="Ngp">
    <property type="organism name" value="mouse"/>
</dbReference>
<dbReference type="PRO" id="PR:O08692"/>
<dbReference type="Proteomes" id="UP000000589">
    <property type="component" value="Chromosome 9"/>
</dbReference>
<dbReference type="RNAct" id="O08692">
    <property type="molecule type" value="protein"/>
</dbReference>
<dbReference type="Bgee" id="ENSMUSG00000032484">
    <property type="expression patterns" value="Expressed in granulocyte and 110 other cell types or tissues"/>
</dbReference>
<dbReference type="GO" id="GO:0031410">
    <property type="term" value="C:cytoplasmic vesicle"/>
    <property type="evidence" value="ECO:0000314"/>
    <property type="project" value="MGI"/>
</dbReference>
<dbReference type="GO" id="GO:0005615">
    <property type="term" value="C:extracellular space"/>
    <property type="evidence" value="ECO:0000314"/>
    <property type="project" value="UniProtKB"/>
</dbReference>
<dbReference type="GO" id="GO:0004869">
    <property type="term" value="F:cysteine-type endopeptidase inhibitor activity"/>
    <property type="evidence" value="ECO:0000314"/>
    <property type="project" value="UniProtKB"/>
</dbReference>
<dbReference type="GO" id="GO:0006952">
    <property type="term" value="P:defense response"/>
    <property type="evidence" value="ECO:0007669"/>
    <property type="project" value="InterPro"/>
</dbReference>
<dbReference type="GO" id="GO:0016525">
    <property type="term" value="P:negative regulation of angiogenesis"/>
    <property type="evidence" value="ECO:0000314"/>
    <property type="project" value="UniProtKB"/>
</dbReference>
<dbReference type="GO" id="GO:1901491">
    <property type="term" value="P:negative regulation of lymphangiogenesis"/>
    <property type="evidence" value="ECO:0000314"/>
    <property type="project" value="UniProtKB"/>
</dbReference>
<dbReference type="CDD" id="cd00042">
    <property type="entry name" value="CY"/>
    <property type="match status" value="1"/>
</dbReference>
<dbReference type="FunFam" id="3.10.450.10:FF:000003">
    <property type="entry name" value="Cathelicidin antimicrobial peptide"/>
    <property type="match status" value="1"/>
</dbReference>
<dbReference type="Gene3D" id="3.10.450.10">
    <property type="match status" value="1"/>
</dbReference>
<dbReference type="InterPro" id="IPR001894">
    <property type="entry name" value="Cathelicidin-like"/>
</dbReference>
<dbReference type="InterPro" id="IPR000010">
    <property type="entry name" value="Cystatin_dom"/>
</dbReference>
<dbReference type="InterPro" id="IPR046350">
    <property type="entry name" value="Cystatin_sf"/>
</dbReference>
<dbReference type="PANTHER" id="PTHR10206">
    <property type="entry name" value="CATHELICIDIN"/>
    <property type="match status" value="1"/>
</dbReference>
<dbReference type="PANTHER" id="PTHR10206:SF4">
    <property type="entry name" value="NEUTROPHILIC GRANULE PROTEIN"/>
    <property type="match status" value="1"/>
</dbReference>
<dbReference type="Pfam" id="PF00666">
    <property type="entry name" value="Cathelicidins"/>
    <property type="match status" value="1"/>
</dbReference>
<dbReference type="SMART" id="SM00043">
    <property type="entry name" value="CY"/>
    <property type="match status" value="1"/>
</dbReference>
<dbReference type="SUPFAM" id="SSF54403">
    <property type="entry name" value="Cystatin/monellin"/>
    <property type="match status" value="1"/>
</dbReference>
<sequence>MAGLWKTFVLVVALAVVSCEALRQLRYEEIVDRAIEAYNQGRQGRPLFRLLSATPPSSQNPATNIPLQFRIKETECTSTQERQPKDCDFLEDGEERNCTGKFFRRRQSTSLTLTCDRDCSREDTQETSFNDKQDVSEKEKFEDVPPHIRNIYEDAKYDIIGNILKNF</sequence>
<evidence type="ECO:0000255" key="1"/>
<evidence type="ECO:0000256" key="2">
    <source>
        <dbReference type="SAM" id="MobiDB-lite"/>
    </source>
</evidence>
<evidence type="ECO:0000269" key="3">
    <source>
    </source>
</evidence>
<evidence type="ECO:0000269" key="4">
    <source>
    </source>
</evidence>
<evidence type="ECO:0000269" key="5">
    <source>
    </source>
</evidence>
<evidence type="ECO:0000303" key="6">
    <source>
    </source>
</evidence>
<evidence type="ECO:0000303" key="7">
    <source>
    </source>
</evidence>
<evidence type="ECO:0000303" key="8">
    <source>
    </source>
</evidence>
<evidence type="ECO:0000305" key="9"/>
<evidence type="ECO:0000312" key="10">
    <source>
        <dbReference type="EMBL" id="AAB53634.1"/>
    </source>
</evidence>
<evidence type="ECO:0000312" key="11">
    <source>
        <dbReference type="EMBL" id="AAC42088.1"/>
    </source>
</evidence>
<evidence type="ECO:0000312" key="12">
    <source>
        <dbReference type="EMBL" id="AAI19404.1"/>
    </source>
</evidence>
<evidence type="ECO:0000312" key="13">
    <source>
        <dbReference type="EMBL" id="BAB26414.1"/>
    </source>
</evidence>
<evidence type="ECO:0000312" key="14">
    <source>
        <dbReference type="EMBL" id="EDL09016.1"/>
    </source>
</evidence>
<evidence type="ECO:0000312" key="15">
    <source>
        <dbReference type="MGI" id="MGI:105983"/>
    </source>
</evidence>
<feature type="signal peptide" evidence="1">
    <location>
        <begin position="1"/>
        <end position="21"/>
    </location>
</feature>
<feature type="chain" id="PRO_0000432423" description="Neutrophilic granule protein" evidence="1">
    <location>
        <begin position="22"/>
        <end position="167"/>
    </location>
</feature>
<feature type="region of interest" description="Disordered" evidence="2">
    <location>
        <begin position="122"/>
        <end position="141"/>
    </location>
</feature>
<feature type="sequence conflict" description="In Ref. 1; AAC42088." evidence="9" ref="1">
    <original>D</original>
    <variation>N</variation>
    <location>
        <position position="92"/>
    </location>
</feature>
<reference key="1">
    <citation type="journal article" date="1995" name="J. Cell. Biochem.">
        <title>Molecular cloning of a novel myeloid granule protein.</title>
        <authorList>
            <person name="Moscinski L.C."/>
            <person name="Hill B."/>
        </authorList>
    </citation>
    <scope>NUCLEOTIDE SEQUENCE [MRNA]</scope>
    <scope>SUBCELLULAR LOCATION</scope>
    <scope>TISSUE SPECIFICITY</scope>
    <scope>INDUCTION</scope>
    <source>
        <strain evidence="11">CBA/J</strain>
        <tissue evidence="11">Bone marrow</tissue>
    </source>
</reference>
<reference key="2">
    <citation type="journal article" date="1996" name="Blood">
        <title>E3, a hematopoietic-specific transcript directly regulated by the retinoic acid receptor alpha.</title>
        <authorList>
            <person name="Scott L.M."/>
            <person name="Mueller L."/>
            <person name="Collins S.J."/>
        </authorList>
    </citation>
    <scope>NUCLEOTIDE SEQUENCE [MRNA]</scope>
    <source>
        <strain evidence="10">MDF1</strain>
    </source>
</reference>
<reference key="3">
    <citation type="journal article" date="2005" name="Science">
        <title>The transcriptional landscape of the mammalian genome.</title>
        <authorList>
            <person name="Carninci P."/>
            <person name="Kasukawa T."/>
            <person name="Katayama S."/>
            <person name="Gough J."/>
            <person name="Frith M.C."/>
            <person name="Maeda N."/>
            <person name="Oyama R."/>
            <person name="Ravasi T."/>
            <person name="Lenhard B."/>
            <person name="Wells C."/>
            <person name="Kodzius R."/>
            <person name="Shimokawa K."/>
            <person name="Bajic V.B."/>
            <person name="Brenner S.E."/>
            <person name="Batalov S."/>
            <person name="Forrest A.R."/>
            <person name="Zavolan M."/>
            <person name="Davis M.J."/>
            <person name="Wilming L.G."/>
            <person name="Aidinis V."/>
            <person name="Allen J.E."/>
            <person name="Ambesi-Impiombato A."/>
            <person name="Apweiler R."/>
            <person name="Aturaliya R.N."/>
            <person name="Bailey T.L."/>
            <person name="Bansal M."/>
            <person name="Baxter L."/>
            <person name="Beisel K.W."/>
            <person name="Bersano T."/>
            <person name="Bono H."/>
            <person name="Chalk A.M."/>
            <person name="Chiu K.P."/>
            <person name="Choudhary V."/>
            <person name="Christoffels A."/>
            <person name="Clutterbuck D.R."/>
            <person name="Crowe M.L."/>
            <person name="Dalla E."/>
            <person name="Dalrymple B.P."/>
            <person name="de Bono B."/>
            <person name="Della Gatta G."/>
            <person name="di Bernardo D."/>
            <person name="Down T."/>
            <person name="Engstrom P."/>
            <person name="Fagiolini M."/>
            <person name="Faulkner G."/>
            <person name="Fletcher C.F."/>
            <person name="Fukushima T."/>
            <person name="Furuno M."/>
            <person name="Futaki S."/>
            <person name="Gariboldi M."/>
            <person name="Georgii-Hemming P."/>
            <person name="Gingeras T.R."/>
            <person name="Gojobori T."/>
            <person name="Green R.E."/>
            <person name="Gustincich S."/>
            <person name="Harbers M."/>
            <person name="Hayashi Y."/>
            <person name="Hensch T.K."/>
            <person name="Hirokawa N."/>
            <person name="Hill D."/>
            <person name="Huminiecki L."/>
            <person name="Iacono M."/>
            <person name="Ikeo K."/>
            <person name="Iwama A."/>
            <person name="Ishikawa T."/>
            <person name="Jakt M."/>
            <person name="Kanapin A."/>
            <person name="Katoh M."/>
            <person name="Kawasawa Y."/>
            <person name="Kelso J."/>
            <person name="Kitamura H."/>
            <person name="Kitano H."/>
            <person name="Kollias G."/>
            <person name="Krishnan S.P."/>
            <person name="Kruger A."/>
            <person name="Kummerfeld S.K."/>
            <person name="Kurochkin I.V."/>
            <person name="Lareau L.F."/>
            <person name="Lazarevic D."/>
            <person name="Lipovich L."/>
            <person name="Liu J."/>
            <person name="Liuni S."/>
            <person name="McWilliam S."/>
            <person name="Madan Babu M."/>
            <person name="Madera M."/>
            <person name="Marchionni L."/>
            <person name="Matsuda H."/>
            <person name="Matsuzawa S."/>
            <person name="Miki H."/>
            <person name="Mignone F."/>
            <person name="Miyake S."/>
            <person name="Morris K."/>
            <person name="Mottagui-Tabar S."/>
            <person name="Mulder N."/>
            <person name="Nakano N."/>
            <person name="Nakauchi H."/>
            <person name="Ng P."/>
            <person name="Nilsson R."/>
            <person name="Nishiguchi S."/>
            <person name="Nishikawa S."/>
            <person name="Nori F."/>
            <person name="Ohara O."/>
            <person name="Okazaki Y."/>
            <person name="Orlando V."/>
            <person name="Pang K.C."/>
            <person name="Pavan W.J."/>
            <person name="Pavesi G."/>
            <person name="Pesole G."/>
            <person name="Petrovsky N."/>
            <person name="Piazza S."/>
            <person name="Reed J."/>
            <person name="Reid J.F."/>
            <person name="Ring B.Z."/>
            <person name="Ringwald M."/>
            <person name="Rost B."/>
            <person name="Ruan Y."/>
            <person name="Salzberg S.L."/>
            <person name="Sandelin A."/>
            <person name="Schneider C."/>
            <person name="Schoenbach C."/>
            <person name="Sekiguchi K."/>
            <person name="Semple C.A."/>
            <person name="Seno S."/>
            <person name="Sessa L."/>
            <person name="Sheng Y."/>
            <person name="Shibata Y."/>
            <person name="Shimada H."/>
            <person name="Shimada K."/>
            <person name="Silva D."/>
            <person name="Sinclair B."/>
            <person name="Sperling S."/>
            <person name="Stupka E."/>
            <person name="Sugiura K."/>
            <person name="Sultana R."/>
            <person name="Takenaka Y."/>
            <person name="Taki K."/>
            <person name="Tammoja K."/>
            <person name="Tan S.L."/>
            <person name="Tang S."/>
            <person name="Taylor M.S."/>
            <person name="Tegner J."/>
            <person name="Teichmann S.A."/>
            <person name="Ueda H.R."/>
            <person name="van Nimwegen E."/>
            <person name="Verardo R."/>
            <person name="Wei C.L."/>
            <person name="Yagi K."/>
            <person name="Yamanishi H."/>
            <person name="Zabarovsky E."/>
            <person name="Zhu S."/>
            <person name="Zimmer A."/>
            <person name="Hide W."/>
            <person name="Bult C."/>
            <person name="Grimmond S.M."/>
            <person name="Teasdale R.D."/>
            <person name="Liu E.T."/>
            <person name="Brusic V."/>
            <person name="Quackenbush J."/>
            <person name="Wahlestedt C."/>
            <person name="Mattick J.S."/>
            <person name="Hume D.A."/>
            <person name="Kai C."/>
            <person name="Sasaki D."/>
            <person name="Tomaru Y."/>
            <person name="Fukuda S."/>
            <person name="Kanamori-Katayama M."/>
            <person name="Suzuki M."/>
            <person name="Aoki J."/>
            <person name="Arakawa T."/>
            <person name="Iida J."/>
            <person name="Imamura K."/>
            <person name="Itoh M."/>
            <person name="Kato T."/>
            <person name="Kawaji H."/>
            <person name="Kawagashira N."/>
            <person name="Kawashima T."/>
            <person name="Kojima M."/>
            <person name="Kondo S."/>
            <person name="Konno H."/>
            <person name="Nakano K."/>
            <person name="Ninomiya N."/>
            <person name="Nishio T."/>
            <person name="Okada M."/>
            <person name="Plessy C."/>
            <person name="Shibata K."/>
            <person name="Shiraki T."/>
            <person name="Suzuki S."/>
            <person name="Tagami M."/>
            <person name="Waki K."/>
            <person name="Watahiki A."/>
            <person name="Okamura-Oho Y."/>
            <person name="Suzuki H."/>
            <person name="Kawai J."/>
            <person name="Hayashizaki Y."/>
        </authorList>
    </citation>
    <scope>NUCLEOTIDE SEQUENCE [LARGE SCALE MRNA]</scope>
    <source>
        <strain evidence="13">C57BL/6J</strain>
        <tissue evidence="13">Tongue</tissue>
    </source>
</reference>
<reference key="4">
    <citation type="journal article" date="2009" name="PLoS Biol.">
        <title>Lineage-specific biology revealed by a finished genome assembly of the mouse.</title>
        <authorList>
            <person name="Church D.M."/>
            <person name="Goodstadt L."/>
            <person name="Hillier L.W."/>
            <person name="Zody M.C."/>
            <person name="Goldstein S."/>
            <person name="She X."/>
            <person name="Bult C.J."/>
            <person name="Agarwala R."/>
            <person name="Cherry J.L."/>
            <person name="DiCuccio M."/>
            <person name="Hlavina W."/>
            <person name="Kapustin Y."/>
            <person name="Meric P."/>
            <person name="Maglott D."/>
            <person name="Birtle Z."/>
            <person name="Marques A.C."/>
            <person name="Graves T."/>
            <person name="Zhou S."/>
            <person name="Teague B."/>
            <person name="Potamousis K."/>
            <person name="Churas C."/>
            <person name="Place M."/>
            <person name="Herschleb J."/>
            <person name="Runnheim R."/>
            <person name="Forrest D."/>
            <person name="Amos-Landgraf J."/>
            <person name="Schwartz D.C."/>
            <person name="Cheng Z."/>
            <person name="Lindblad-Toh K."/>
            <person name="Eichler E.E."/>
            <person name="Ponting C.P."/>
        </authorList>
    </citation>
    <scope>NUCLEOTIDE SEQUENCE [LARGE SCALE GENOMIC DNA]</scope>
    <source>
        <strain>C57BL/6J</strain>
    </source>
</reference>
<reference key="5">
    <citation type="submission" date="2005-09" db="EMBL/GenBank/DDBJ databases">
        <authorList>
            <person name="Mural R.J."/>
            <person name="Adams M.D."/>
            <person name="Myers E.W."/>
            <person name="Smith H.O."/>
            <person name="Venter J.C."/>
        </authorList>
    </citation>
    <scope>NUCLEOTIDE SEQUENCE [LARGE SCALE GENOMIC DNA]</scope>
    <source>
        <strain evidence="14">Mixed</strain>
    </source>
</reference>
<reference key="6">
    <citation type="journal article" date="2004" name="Genome Res.">
        <title>The status, quality, and expansion of the NIH full-length cDNA project: the Mammalian Gene Collection (MGC).</title>
        <authorList>
            <consortium name="The MGC Project Team"/>
        </authorList>
    </citation>
    <scope>NUCLEOTIDE SEQUENCE [LARGE SCALE MRNA]</scope>
    <source>
        <tissue evidence="12">Brain</tissue>
    </source>
</reference>
<reference key="7">
    <citation type="journal article" date="2011" name="FASEB J.">
        <title>Identification of a myeloid-derived suppressor cell cystatin-like protein that inhibits metastasis.</title>
        <authorList>
            <person name="Boutte A.M."/>
            <person name="Friedman D.B."/>
            <person name="Bogyo M."/>
            <person name="Min Y."/>
            <person name="Yang L."/>
            <person name="Lin P.C."/>
        </authorList>
    </citation>
    <scope>PROTEIN SEQUENCE OF 34-42; 50-82; 86-96 AND 107-166</scope>
    <scope>FUNCTION</scope>
    <scope>SUBCELLULAR LOCATION</scope>
    <scope>SUBUNIT</scope>
    <scope>TISSUE SPECIFICITY</scope>
    <scope>INDUCTION</scope>
    <scope>IDENTIFICATION BY MASS SPECTROMETRY</scope>
</reference>
<reference key="8">
    <citation type="journal article" date="2003" name="Blood">
        <title>Regulation of neutrophil and eosinophil secondary granule gene expression by transcription factors C/EBP epsilon and PU.1.</title>
        <authorList>
            <person name="Gombart A.F."/>
            <person name="Kwok S.H."/>
            <person name="Anderson K.L."/>
            <person name="Yamaguchi Y."/>
            <person name="Torbett B.E."/>
            <person name="Koeffler H.P."/>
        </authorList>
    </citation>
    <scope>INDUCTION</scope>
</reference>
<reference key="9">
    <citation type="journal article" date="2010" name="Cell">
        <title>A tissue-specific atlas of mouse protein phosphorylation and expression.</title>
        <authorList>
            <person name="Huttlin E.L."/>
            <person name="Jedrychowski M.P."/>
            <person name="Elias J.E."/>
            <person name="Goswami T."/>
            <person name="Rad R."/>
            <person name="Beausoleil S.A."/>
            <person name="Villen J."/>
            <person name="Haas W."/>
            <person name="Sowa M.E."/>
            <person name="Gygi S.P."/>
        </authorList>
    </citation>
    <scope>IDENTIFICATION BY MASS SPECTROMETRY [LARGE SCALE ANALYSIS]</scope>
    <source>
        <tissue>Lung</tissue>
        <tissue>Spleen</tissue>
    </source>
</reference>